<comment type="function">
    <text evidence="2 4 11">Required for secretion of EsxA (ESAT-6) and EsxB (CFP-10) and for virulence. Involved in translocation of bacteria from the host (human) phagolysosome to the host cytoplasm (PubMed:17604718).</text>
</comment>
<comment type="subunit">
    <text evidence="6 7">Homodimer; disulfide-linked (PubMed:20585630). An artificial EsxB-EsxA heterodimer interacts with EspA (PubMed:19854905).</text>
</comment>
<comment type="subcellular location">
    <subcellularLocation>
        <location evidence="2 7 8">Secreted</location>
    </subcellularLocation>
    <text evidence="2">Secreted via the ESX-1 / type VII secretion system (T7SS) (PubMed:16030141). Secretion of EspA, EsxA and EsxB is mutually dependent (PubMed:16030141).</text>
</comment>
<comment type="induction">
    <text evidence="3 5 9 10 12">Transcriptionally activated by EspR (PubMed:18685700, PubMed:22389481, PubMed:25536998). Repressed by the MprB/MprA two-component system, by direct regulation and via EspR (PubMed:23104803, PubMed:25536998). Up-regulated by the PhoP/PhoR two-component system, via EspR (PubMed:16573683, PubMed:25536998).</text>
</comment>
<comment type="disruption phenotype">
    <text evidence="2 4 13">Deletion mutants fail to secrete EsxA and EsxB, and are as attenuated as ESX-1 mutants in virulence assays (PubMed:16030141). Bacteria no longer translocate from the phagolysosome to the cytosol of host (human) cells; bacteria replicate in phagolysosome (PubMed:17604718). Host (human) cells no longer produce cytokine IP-10 (CXCL10) upon infection, but continue to produce IL-1 beta (IL1B) (PubMed:26048138).</text>
</comment>
<comment type="miscellaneous">
    <text evidence="8">Maintenance of wild-type levels of EspA requires both EspC and EspD.</text>
</comment>
<comment type="miscellaneous">
    <text evidence="16 17">Has been postulated to mediate virulence through maintenance of mycobacterial cell surface integrity (PubMed:20585630), but studies of detergent sensitivity of various strains and mutants indicate that EspACD and ESX-1 deficiency does not impact the cell surface integrity (PubMed:24078612).</text>
</comment>
<keyword id="KW-1015">Disulfide bond</keyword>
<keyword id="KW-1185">Reference proteome</keyword>
<keyword id="KW-0964">Secreted</keyword>
<keyword id="KW-0843">Virulence</keyword>
<protein>
    <recommendedName>
        <fullName evidence="15">ESX-1 secretion-associated protein EspA</fullName>
    </recommendedName>
</protein>
<feature type="chain" id="PRO_0000393903" description="ESX-1 secretion-associated protein EspA">
    <location>
        <begin position="1"/>
        <end position="392"/>
    </location>
</feature>
<feature type="region of interest" description="Disordered" evidence="1">
    <location>
        <begin position="302"/>
        <end position="392"/>
    </location>
</feature>
<feature type="compositionally biased region" description="Gly residues" evidence="1">
    <location>
        <begin position="334"/>
        <end position="344"/>
    </location>
</feature>
<feature type="disulfide bond" description="Interchain" evidence="7">
    <location>
        <position position="138"/>
    </location>
</feature>
<feature type="mutagenesis site" description="Severely destabilizes EspA and blocks ESX-1 secretion in vitro, but does not impact the cytotoxicity in cellular models of infection. Can induce pro-inflammatory responses in THP-1 cells and is as virulent as wild-type during the acute phase of infection in mice." evidence="11">
    <original>F</original>
    <variation>R</variation>
    <location>
        <position position="5"/>
    </location>
</feature>
<feature type="mutagenesis site" description="Severely destabilizes EspA and blocks ESX-1 secretion in vitro, but does not impact the cytotoxicity in cellular models of infection. Can induce pro-inflammatory responses in THP-1 cells and is as virulent as wild-type during the acute phase of infection in mice." evidence="11">
    <original>K</original>
    <variation>A</variation>
    <location>
        <position position="41"/>
    </location>
</feature>
<feature type="mutagenesis site" description="Severely destabilizes EspA and blocks ESX-1 secretion in vitro. Attenuated in cellular models of tuberculosis infection." evidence="11">
    <original>F</original>
    <variation>R</variation>
    <location>
        <position position="50"/>
    </location>
</feature>
<feature type="mutagenesis site" description="Impairs EsxA and EsxB secretion in vitro. Modest impact on EspD stability and secretion. Attenuated in cellular models of tuberculosis infection." evidence="11">
    <original>W</original>
    <variation>R</variation>
    <location>
        <position position="55"/>
    </location>
</feature>
<feature type="mutagenesis site" description="Impairs EsxA and EsxB secretion in vitro. Modest impact on EspD stability and secretion. Attenuated in cellular models of tuberculosis infection." evidence="11">
    <original>G</original>
    <variation>R</variation>
    <location>
        <position position="57"/>
    </location>
</feature>
<feature type="mutagenesis site" description="Severely destabilizes EspA and blocks ESX-1 secretion in vitro. Attenuated in cellular models of tuberculosis infection." evidence="11">
    <original>K</original>
    <variation>A</variation>
    <location>
        <position position="62"/>
    </location>
</feature>
<feature type="mutagenesis site" description="Does not affect secretion, but inhibits disulfide bond formation. Alters mycobacterial cell wall integrity and significantly attenuates virulence." evidence="7">
    <original>C</original>
    <variation>A</variation>
    <location>
        <position position="138"/>
    </location>
</feature>
<accession>P9WJE1</accession>
<accession>L0TDB5</accession>
<accession>O06267</accession>
<accession>Q7D572</accession>
<evidence type="ECO:0000256" key="1">
    <source>
        <dbReference type="SAM" id="MobiDB-lite"/>
    </source>
</evidence>
<evidence type="ECO:0000269" key="2">
    <source>
    </source>
</evidence>
<evidence type="ECO:0000269" key="3">
    <source>
    </source>
</evidence>
<evidence type="ECO:0000269" key="4">
    <source>
    </source>
</evidence>
<evidence type="ECO:0000269" key="5">
    <source>
    </source>
</evidence>
<evidence type="ECO:0000269" key="6">
    <source>
    </source>
</evidence>
<evidence type="ECO:0000269" key="7">
    <source>
    </source>
</evidence>
<evidence type="ECO:0000269" key="8">
    <source>
    </source>
</evidence>
<evidence type="ECO:0000269" key="9">
    <source>
    </source>
</evidence>
<evidence type="ECO:0000269" key="10">
    <source>
    </source>
</evidence>
<evidence type="ECO:0000269" key="11">
    <source>
    </source>
</evidence>
<evidence type="ECO:0000269" key="12">
    <source>
    </source>
</evidence>
<evidence type="ECO:0000269" key="13">
    <source>
    </source>
</evidence>
<evidence type="ECO:0000303" key="14">
    <source>
    </source>
</evidence>
<evidence type="ECO:0000305" key="15"/>
<evidence type="ECO:0000305" key="16">
    <source>
    </source>
</evidence>
<evidence type="ECO:0000305" key="17">
    <source>
    </source>
</evidence>
<reference key="1">
    <citation type="journal article" date="1998" name="Nature">
        <title>Deciphering the biology of Mycobacterium tuberculosis from the complete genome sequence.</title>
        <authorList>
            <person name="Cole S.T."/>
            <person name="Brosch R."/>
            <person name="Parkhill J."/>
            <person name="Garnier T."/>
            <person name="Churcher C.M."/>
            <person name="Harris D.E."/>
            <person name="Gordon S.V."/>
            <person name="Eiglmeier K."/>
            <person name="Gas S."/>
            <person name="Barry C.E. III"/>
            <person name="Tekaia F."/>
            <person name="Badcock K."/>
            <person name="Basham D."/>
            <person name="Brown D."/>
            <person name="Chillingworth T."/>
            <person name="Connor R."/>
            <person name="Davies R.M."/>
            <person name="Devlin K."/>
            <person name="Feltwell T."/>
            <person name="Gentles S."/>
            <person name="Hamlin N."/>
            <person name="Holroyd S."/>
            <person name="Hornsby T."/>
            <person name="Jagels K."/>
            <person name="Krogh A."/>
            <person name="McLean J."/>
            <person name="Moule S."/>
            <person name="Murphy L.D."/>
            <person name="Oliver S."/>
            <person name="Osborne J."/>
            <person name="Quail M.A."/>
            <person name="Rajandream M.A."/>
            <person name="Rogers J."/>
            <person name="Rutter S."/>
            <person name="Seeger K."/>
            <person name="Skelton S."/>
            <person name="Squares S."/>
            <person name="Squares R."/>
            <person name="Sulston J.E."/>
            <person name="Taylor K."/>
            <person name="Whitehead S."/>
            <person name="Barrell B.G."/>
        </authorList>
    </citation>
    <scope>NUCLEOTIDE SEQUENCE [LARGE SCALE GENOMIC DNA]</scope>
    <source>
        <strain>ATCC 25618 / H37Rv</strain>
    </source>
</reference>
<reference key="2">
    <citation type="journal article" date="2005" name="Proc. Natl. Acad. Sci. U.S.A.">
        <title>Mutually dependent secretion of proteins required for mycobacterial virulence.</title>
        <authorList>
            <person name="Fortune S.M."/>
            <person name="Jaeger A."/>
            <person name="Sarracino D.A."/>
            <person name="Chase M.R."/>
            <person name="Sassetti C.M."/>
            <person name="Sherman D.R."/>
            <person name="Bloom B.R."/>
            <person name="Rubin E.J."/>
        </authorList>
    </citation>
    <scope>IDENTIFICATION BY MASS SPECTROMETRY</scope>
    <scope>FUNCTION IN VIRULENCE</scope>
    <scope>SUBCELLULAR LOCATION</scope>
    <scope>DISRUPTION PHENOTYPE</scope>
    <source>
        <strain>ATCC 25618 / H37Rv</strain>
    </source>
</reference>
<reference key="3">
    <citation type="journal article" date="2006" name="Mol. Microbiol.">
        <title>The Mycobacterium tuberculosis PhoPR two-component system regulates genes essential for virulence and complex lipid biosynthesis.</title>
        <authorList>
            <person name="Walters S.B."/>
            <person name="Dubnau E."/>
            <person name="Kolesnikova I."/>
            <person name="Laval F."/>
            <person name="Daffe M."/>
            <person name="Smith I."/>
        </authorList>
    </citation>
    <scope>REGULATION BY PHOP/PHOR</scope>
    <source>
        <strain>H37Rv</strain>
    </source>
</reference>
<reference key="4">
    <citation type="journal article" date="2007" name="Cell">
        <title>M. tuberculosis and M. leprae translocate from the phagolysosome to the cytosol in myeloid cells.</title>
        <authorList>
            <person name="van der Wel N."/>
            <person name="Hava D."/>
            <person name="Houben D."/>
            <person name="Fluitsma D."/>
            <person name="van Zon M."/>
            <person name="Pierson J."/>
            <person name="Brenner M."/>
            <person name="Peters P.J."/>
        </authorList>
    </citation>
    <scope>FUNCTION</scope>
    <scope>DISRUPTION PHENOTYPE</scope>
    <source>
        <strain>ATCC 25618 / H37Rv</strain>
    </source>
</reference>
<reference key="5">
    <citation type="journal article" date="2008" name="Nature">
        <title>Secreted transcription factor controls Mycobacterium tuberculosis virulence.</title>
        <authorList>
            <person name="Raghavan S."/>
            <person name="Manzanillo P."/>
            <person name="Chan K."/>
            <person name="Dovey C."/>
            <person name="Cox J.S."/>
        </authorList>
    </citation>
    <scope>REGULATION BY ESPR</scope>
</reference>
<reference key="6">
    <citation type="journal article" date="2010" name="J. Bacteriol.">
        <title>Conservation of structure and protein-protein interactions mediated by the secreted mycobacterial proteins EsxA, EsxB, and EspA.</title>
        <authorList>
            <person name="Callahan B."/>
            <person name="Nguyen K."/>
            <person name="Collins A."/>
            <person name="Valdes K."/>
            <person name="Caplow M."/>
            <person name="Crossman D.K."/>
            <person name="Steyn A.J."/>
            <person name="Eisele L."/>
            <person name="Derbyshire K.M."/>
        </authorList>
    </citation>
    <scope>SUBUNIT</scope>
    <source>
        <strain>ATCC 25618 / H37Rv</strain>
    </source>
</reference>
<reference key="7">
    <citation type="journal article" date="2010" name="PLoS Pathog.">
        <title>EspA acts as a critical mediator of ESX1-dependent virulence in Mycobacterium tuberculosis by affecting bacterial cell wall integrity.</title>
        <authorList>
            <person name="Garces A."/>
            <person name="Atmakuri K."/>
            <person name="Chase M.R."/>
            <person name="Woodworth J.S."/>
            <person name="Krastins B."/>
            <person name="Rothchild A.C."/>
            <person name="Ramsdell T.L."/>
            <person name="Lopez M.F."/>
            <person name="Behar S.M."/>
            <person name="Sarracino D.A."/>
            <person name="Fortune S.M."/>
        </authorList>
    </citation>
    <scope>SUBUNIT</scope>
    <scope>DISULFIDE BOND</scope>
    <scope>SUBCELLULAR LOCATION</scope>
    <scope>MUTAGENESIS OF CYS-138</scope>
</reference>
<reference key="8">
    <citation type="journal article" date="2011" name="Mol. Cell. Proteomics">
        <title>Proteogenomic analysis of Mycobacterium tuberculosis by high resolution mass spectrometry.</title>
        <authorList>
            <person name="Kelkar D.S."/>
            <person name="Kumar D."/>
            <person name="Kumar P."/>
            <person name="Balakrishnan L."/>
            <person name="Muthusamy B."/>
            <person name="Yadav A.K."/>
            <person name="Shrivastava P."/>
            <person name="Marimuthu A."/>
            <person name="Anand S."/>
            <person name="Sundaram H."/>
            <person name="Kingsbury R."/>
            <person name="Harsha H.C."/>
            <person name="Nair B."/>
            <person name="Prasad T.S."/>
            <person name="Chauhan D.S."/>
            <person name="Katoch K."/>
            <person name="Katoch V.M."/>
            <person name="Kumar P."/>
            <person name="Chaerkady R."/>
            <person name="Ramachandran S."/>
            <person name="Dash D."/>
            <person name="Pandey A."/>
        </authorList>
    </citation>
    <scope>IDENTIFICATION BY MASS SPECTROMETRY [LARGE SCALE ANALYSIS]</scope>
    <source>
        <strain>ATCC 25618 / H37Rv</strain>
    </source>
</reference>
<reference key="9">
    <citation type="journal article" date="2012" name="J. Bacteriol.">
        <title>EspD is critical for the virulence-mediating ESX-1 secretion system in Mycobacterium tuberculosis.</title>
        <authorList>
            <person name="Chen J.M."/>
            <person name="Boy-Roettger S."/>
            <person name="Dhar N."/>
            <person name="Sweeney N."/>
            <person name="Buxton R.S."/>
            <person name="Pojer F."/>
            <person name="Rosenkrands I."/>
            <person name="Cole S.T."/>
        </authorList>
    </citation>
    <scope>SUBCELLULAR LOCATION</scope>
    <source>
        <strain>ATCC 35801 / TMC 107 / Erdman</strain>
        <strain>H37Rv</strain>
    </source>
</reference>
<reference key="10">
    <citation type="journal article" date="2012" name="J. Bacteriol.">
        <title>Long-range transcriptional control of an operon necessary for virulence-critical ESX-1 secretion in Mycobacterium tuberculosis.</title>
        <authorList>
            <person name="Hunt D.M."/>
            <person name="Sweeney N.P."/>
            <person name="Mori L."/>
            <person name="Whalan R.H."/>
            <person name="Comas I."/>
            <person name="Norman L."/>
            <person name="Cortes T."/>
            <person name="Arnvig K.B."/>
            <person name="Davis E.O."/>
            <person name="Stapleton M.R."/>
            <person name="Green J."/>
            <person name="Buxton R.S."/>
        </authorList>
    </citation>
    <scope>REGULATION BY ESPR</scope>
    <source>
        <strain>ATCC 25618 / H37Rv</strain>
    </source>
</reference>
<reference key="11">
    <citation type="journal article" date="2013" name="J. Bacteriol.">
        <title>MprAB regulates the espA operon in Mycobacterium tuberculosis and modulates ESX-1 function and host cytokine response.</title>
        <authorList>
            <person name="Pang X."/>
            <person name="Samten B."/>
            <person name="Cao G."/>
            <person name="Wang X."/>
            <person name="Tvinnereim A.R."/>
            <person name="Chen X.L."/>
            <person name="Howard S.T."/>
        </authorList>
    </citation>
    <scope>REGULATION BY MPRA/MPRB</scope>
    <source>
        <strain>H37Rv</strain>
    </source>
</reference>
<reference key="12">
    <citation type="journal article" date="2013" name="J. Bacteriol.">
        <title>Phenotypic profiling of Mycobacterium tuberculosis EspA point mutants reveals that blockage of ESAT-6 and CFP-10 secretion in vitro does not always correlate with attenuation of virulence.</title>
        <authorList>
            <person name="Chen J.M."/>
            <person name="Zhang M."/>
            <person name="Rybniker J."/>
            <person name="Basterra L."/>
            <person name="Dhar N."/>
            <person name="Tischler A.D."/>
            <person name="Pojer F."/>
            <person name="Cole S.T."/>
        </authorList>
    </citation>
    <scope>FUNCTION</scope>
    <scope>MUTAGENESIS OF PHE-5; LYS-41; PHE-50; TRP-55; GLY-57 AND LYS-62</scope>
    <source>
        <strain>ATCC 35801 / TMC 107 / Erdman</strain>
        <strain>H37Rv</strain>
    </source>
</reference>
<reference key="13">
    <citation type="journal article" date="2015" name="Microbiology">
        <title>EspR, a regulator of the ESX-1 secretion system in Mycobacterium tuberculosis, is directly regulated by the two-component systems MprAB and PhoPR.</title>
        <authorList>
            <person name="Cao G."/>
            <person name="Howard S.T."/>
            <person name="Zhang P."/>
            <person name="Wang X."/>
            <person name="Chen X.L."/>
            <person name="Samten B."/>
            <person name="Pang X."/>
        </authorList>
    </citation>
    <scope>TRANSCRIPTIONAL REGULATION</scope>
    <source>
        <strain>ATCC 35801 / TMC 107 / Erdman</strain>
    </source>
</reference>
<reference key="14">
    <citation type="journal article" date="2015" name="Cell Host Microbe">
        <title>Mycobacterium tuberculosis differentially activates cGAS- and inflammasome-dependent intracellular immune responses through ESX-1.</title>
        <authorList>
            <person name="Wassermann R."/>
            <person name="Gulen M.F."/>
            <person name="Sala C."/>
            <person name="Perin S.G."/>
            <person name="Lou Y."/>
            <person name="Rybniker J."/>
            <person name="Schmid-Burgk J.L."/>
            <person name="Schmidt T."/>
            <person name="Hornung V."/>
            <person name="Cole S.T."/>
            <person name="Ablasser A."/>
        </authorList>
    </citation>
    <scope>FUNCTION</scope>
    <scope>DISRUPTION PHENOTYPE</scope>
    <source>
        <strain>ATCC 35801 / TMC 107 / Erdman</strain>
    </source>
</reference>
<gene>
    <name evidence="14" type="primary">espA</name>
    <name type="ordered locus">Rv3616c</name>
</gene>
<organism>
    <name type="scientific">Mycobacterium tuberculosis (strain ATCC 25618 / H37Rv)</name>
    <dbReference type="NCBI Taxonomy" id="83332"/>
    <lineage>
        <taxon>Bacteria</taxon>
        <taxon>Bacillati</taxon>
        <taxon>Actinomycetota</taxon>
        <taxon>Actinomycetes</taxon>
        <taxon>Mycobacteriales</taxon>
        <taxon>Mycobacteriaceae</taxon>
        <taxon>Mycobacterium</taxon>
        <taxon>Mycobacterium tuberculosis complex</taxon>
    </lineage>
</organism>
<sequence>MSRAFIIDPTISAIDGLYDLLGIGIPNQGGILYSSLEYFEKALEELAAAFPGDGWLGSAADKYAGKNRNHVNFFQELADLDRQLISLIHDQANAVQTTRDILEGAKKGLEFVRPVAVDLTYIPVVGHALSAAFQAPFCAGAMAVVGGALAYLVVKTLINATQLLKLLAKLAELVAAAIADIISDVADIIKGTLGEVWEFITNALNGLKELWDKLTGWVTGLFSRGWSNLESFFAGVPGLTGATSGLSQVTGLFGAAGLSASSGLAHADSLASSASLPALAGIGGGSGFGGLPSLAQVHAASTRQALRPRADGPVGAAAEQVGGQSQLVSAQGSQGMGGPVGMGGMHPSSGASKGTTTKKYSEGAAAGTEDAERAPVEADAGGGQKVLVRNVV</sequence>
<name>ESPA_MYCTU</name>
<dbReference type="EMBL" id="AL123456">
    <property type="protein sequence ID" value="CCP46439.1"/>
    <property type="molecule type" value="Genomic_DNA"/>
</dbReference>
<dbReference type="PIR" id="A70957">
    <property type="entry name" value="A70957"/>
</dbReference>
<dbReference type="RefSeq" id="NP_218133.1">
    <property type="nucleotide sequence ID" value="NC_000962.3"/>
</dbReference>
<dbReference type="RefSeq" id="WP_003912265.1">
    <property type="nucleotide sequence ID" value="NZ_NVQJ01000056.1"/>
</dbReference>
<dbReference type="FunCoup" id="P9WJE1">
    <property type="interactions" value="2"/>
</dbReference>
<dbReference type="IntAct" id="P9WJE1">
    <property type="interactions" value="1"/>
</dbReference>
<dbReference type="STRING" id="83332.Rv3616c"/>
<dbReference type="PaxDb" id="83332-Rv3616c"/>
<dbReference type="DNASU" id="885377"/>
<dbReference type="GeneID" id="885377"/>
<dbReference type="KEGG" id="mtu:Rv3616c"/>
<dbReference type="KEGG" id="mtv:RVBD_3616c"/>
<dbReference type="TubercuList" id="Rv3616c"/>
<dbReference type="eggNOG" id="ENOG5031E2U">
    <property type="taxonomic scope" value="Bacteria"/>
</dbReference>
<dbReference type="InParanoid" id="P9WJE1"/>
<dbReference type="OrthoDB" id="4719109at2"/>
<dbReference type="Proteomes" id="UP000001584">
    <property type="component" value="Chromosome"/>
</dbReference>
<dbReference type="GO" id="GO:0005576">
    <property type="term" value="C:extracellular region"/>
    <property type="evidence" value="ECO:0000314"/>
    <property type="project" value="MTBBASE"/>
</dbReference>
<dbReference type="GO" id="GO:0005615">
    <property type="term" value="C:extracellular space"/>
    <property type="evidence" value="ECO:0000314"/>
    <property type="project" value="MTBBASE"/>
</dbReference>
<dbReference type="GO" id="GO:0005886">
    <property type="term" value="C:plasma membrane"/>
    <property type="evidence" value="ECO:0007005"/>
    <property type="project" value="MTBBASE"/>
</dbReference>
<dbReference type="GO" id="GO:0071766">
    <property type="term" value="P:Actinobacterium-type cell wall biogenesis"/>
    <property type="evidence" value="ECO:0000314"/>
    <property type="project" value="MTBBASE"/>
</dbReference>
<dbReference type="GO" id="GO:0051701">
    <property type="term" value="P:biological process involved in interaction with host"/>
    <property type="evidence" value="ECO:0000314"/>
    <property type="project" value="MTBBASE"/>
</dbReference>
<dbReference type="GO" id="GO:0044315">
    <property type="term" value="P:protein secretion by the type VII secretion system"/>
    <property type="evidence" value="ECO:0000315"/>
    <property type="project" value="MTBBASE"/>
</dbReference>
<dbReference type="InterPro" id="IPR043796">
    <property type="entry name" value="ESX-1_EspA/EspE-like"/>
</dbReference>
<dbReference type="Pfam" id="PF18879">
    <property type="entry name" value="EspA_EspE"/>
    <property type="match status" value="1"/>
</dbReference>
<proteinExistence type="evidence at protein level"/>